<reference key="1">
    <citation type="journal article" date="2007" name="J. Bacteriol.">
        <title>The complete genome sequence of Campylobacter jejuni strain 81116 (NCTC11828).</title>
        <authorList>
            <person name="Pearson B.M."/>
            <person name="Gaskin D.J.H."/>
            <person name="Segers R.P.A.M."/>
            <person name="Wells J.M."/>
            <person name="Nuijten P.J.M."/>
            <person name="van Vliet A.H.M."/>
        </authorList>
    </citation>
    <scope>NUCLEOTIDE SEQUENCE [LARGE SCALE GENOMIC DNA]</scope>
    <source>
        <strain>81116 / NCTC 11828</strain>
    </source>
</reference>
<name>RL16_CAMJ8</name>
<organism>
    <name type="scientific">Campylobacter jejuni subsp. jejuni serotype O:6 (strain 81116 / NCTC 11828)</name>
    <dbReference type="NCBI Taxonomy" id="407148"/>
    <lineage>
        <taxon>Bacteria</taxon>
        <taxon>Pseudomonadati</taxon>
        <taxon>Campylobacterota</taxon>
        <taxon>Epsilonproteobacteria</taxon>
        <taxon>Campylobacterales</taxon>
        <taxon>Campylobacteraceae</taxon>
        <taxon>Campylobacter</taxon>
    </lineage>
</organism>
<proteinExistence type="inferred from homology"/>
<gene>
    <name evidence="1" type="primary">rplP</name>
    <name type="ordered locus">C8J_1604</name>
</gene>
<accession>A8FP14</accession>
<feature type="chain" id="PRO_1000073324" description="Large ribosomal subunit protein uL16">
    <location>
        <begin position="1"/>
        <end position="141"/>
    </location>
</feature>
<dbReference type="EMBL" id="CP000814">
    <property type="protein sequence ID" value="ABV53201.1"/>
    <property type="molecule type" value="Genomic_DNA"/>
</dbReference>
<dbReference type="RefSeq" id="WP_002779441.1">
    <property type="nucleotide sequence ID" value="NC_009839.1"/>
</dbReference>
<dbReference type="SMR" id="A8FP14"/>
<dbReference type="GeneID" id="66544936"/>
<dbReference type="KEGG" id="cju:C8J_1604"/>
<dbReference type="HOGENOM" id="CLU_078858_2_1_7"/>
<dbReference type="GO" id="GO:0022625">
    <property type="term" value="C:cytosolic large ribosomal subunit"/>
    <property type="evidence" value="ECO:0007669"/>
    <property type="project" value="TreeGrafter"/>
</dbReference>
<dbReference type="GO" id="GO:0019843">
    <property type="term" value="F:rRNA binding"/>
    <property type="evidence" value="ECO:0007669"/>
    <property type="project" value="UniProtKB-UniRule"/>
</dbReference>
<dbReference type="GO" id="GO:0003735">
    <property type="term" value="F:structural constituent of ribosome"/>
    <property type="evidence" value="ECO:0007669"/>
    <property type="project" value="InterPro"/>
</dbReference>
<dbReference type="GO" id="GO:0000049">
    <property type="term" value="F:tRNA binding"/>
    <property type="evidence" value="ECO:0007669"/>
    <property type="project" value="UniProtKB-KW"/>
</dbReference>
<dbReference type="GO" id="GO:0006412">
    <property type="term" value="P:translation"/>
    <property type="evidence" value="ECO:0007669"/>
    <property type="project" value="UniProtKB-UniRule"/>
</dbReference>
<dbReference type="CDD" id="cd01433">
    <property type="entry name" value="Ribosomal_L16_L10e"/>
    <property type="match status" value="1"/>
</dbReference>
<dbReference type="FunFam" id="3.90.1170.10:FF:000001">
    <property type="entry name" value="50S ribosomal protein L16"/>
    <property type="match status" value="1"/>
</dbReference>
<dbReference type="Gene3D" id="3.90.1170.10">
    <property type="entry name" value="Ribosomal protein L10e/L16"/>
    <property type="match status" value="1"/>
</dbReference>
<dbReference type="HAMAP" id="MF_01342">
    <property type="entry name" value="Ribosomal_uL16"/>
    <property type="match status" value="1"/>
</dbReference>
<dbReference type="InterPro" id="IPR047873">
    <property type="entry name" value="Ribosomal_uL16"/>
</dbReference>
<dbReference type="InterPro" id="IPR000114">
    <property type="entry name" value="Ribosomal_uL16_bact-type"/>
</dbReference>
<dbReference type="InterPro" id="IPR020798">
    <property type="entry name" value="Ribosomal_uL16_CS"/>
</dbReference>
<dbReference type="InterPro" id="IPR016180">
    <property type="entry name" value="Ribosomal_uL16_dom"/>
</dbReference>
<dbReference type="InterPro" id="IPR036920">
    <property type="entry name" value="Ribosomal_uL16_sf"/>
</dbReference>
<dbReference type="NCBIfam" id="TIGR01164">
    <property type="entry name" value="rplP_bact"/>
    <property type="match status" value="1"/>
</dbReference>
<dbReference type="PANTHER" id="PTHR12220">
    <property type="entry name" value="50S/60S RIBOSOMAL PROTEIN L16"/>
    <property type="match status" value="1"/>
</dbReference>
<dbReference type="PANTHER" id="PTHR12220:SF13">
    <property type="entry name" value="LARGE RIBOSOMAL SUBUNIT PROTEIN UL16M"/>
    <property type="match status" value="1"/>
</dbReference>
<dbReference type="Pfam" id="PF00252">
    <property type="entry name" value="Ribosomal_L16"/>
    <property type="match status" value="1"/>
</dbReference>
<dbReference type="PRINTS" id="PR00060">
    <property type="entry name" value="RIBOSOMALL16"/>
</dbReference>
<dbReference type="SUPFAM" id="SSF54686">
    <property type="entry name" value="Ribosomal protein L16p/L10e"/>
    <property type="match status" value="1"/>
</dbReference>
<dbReference type="PROSITE" id="PS00701">
    <property type="entry name" value="RIBOSOMAL_L16_2"/>
    <property type="match status" value="1"/>
</dbReference>
<sequence>MLMPKRTKYRKMMKGRNRGYANRGTEFTFGEFALKATEAGRINSRQIEAARIALTRFVKRQGKTWIRVFPDKPLTKKPLETRMGKGKGAVEEWVMNIKPGRIIYEMAGVSEEMAREALTLAMHKLPFKTKFVTRESQNEIY</sequence>
<protein>
    <recommendedName>
        <fullName evidence="1">Large ribosomal subunit protein uL16</fullName>
    </recommendedName>
    <alternativeName>
        <fullName evidence="2">50S ribosomal protein L16</fullName>
    </alternativeName>
</protein>
<evidence type="ECO:0000255" key="1">
    <source>
        <dbReference type="HAMAP-Rule" id="MF_01342"/>
    </source>
</evidence>
<evidence type="ECO:0000305" key="2"/>
<keyword id="KW-0687">Ribonucleoprotein</keyword>
<keyword id="KW-0689">Ribosomal protein</keyword>
<keyword id="KW-0694">RNA-binding</keyword>
<keyword id="KW-0699">rRNA-binding</keyword>
<keyword id="KW-0820">tRNA-binding</keyword>
<comment type="function">
    <text evidence="1">Binds 23S rRNA and is also seen to make contacts with the A and possibly P site tRNAs.</text>
</comment>
<comment type="subunit">
    <text evidence="1">Part of the 50S ribosomal subunit.</text>
</comment>
<comment type="similarity">
    <text evidence="1">Belongs to the universal ribosomal protein uL16 family.</text>
</comment>